<comment type="function">
    <text evidence="1">Involved in the third step of the chorismate pathway, which leads to the biosynthesis of aromatic amino acids. Catalyzes the cis-dehydration of 3-dehydroquinate (DHQ) and introduces the first double bond of the aromatic ring to yield 3-dehydroshikimate.</text>
</comment>
<comment type="catalytic activity">
    <reaction evidence="1">
        <text>3-dehydroquinate = 3-dehydroshikimate + H2O</text>
        <dbReference type="Rhea" id="RHEA:21096"/>
        <dbReference type="ChEBI" id="CHEBI:15377"/>
        <dbReference type="ChEBI" id="CHEBI:16630"/>
        <dbReference type="ChEBI" id="CHEBI:32364"/>
        <dbReference type="EC" id="4.2.1.10"/>
    </reaction>
</comment>
<comment type="pathway">
    <text evidence="1">Metabolic intermediate biosynthesis; chorismate biosynthesis; chorismate from D-erythrose 4-phosphate and phosphoenolpyruvate: step 3/7.</text>
</comment>
<comment type="subunit">
    <text evidence="1">Homodimer.</text>
</comment>
<comment type="similarity">
    <text evidence="1">Belongs to the type-I 3-dehydroquinase family.</text>
</comment>
<keyword id="KW-0028">Amino-acid biosynthesis</keyword>
<keyword id="KW-0057">Aromatic amino acid biosynthesis</keyword>
<keyword id="KW-0456">Lyase</keyword>
<keyword id="KW-1185">Reference proteome</keyword>
<keyword id="KW-0704">Schiff base</keyword>
<accession>Q04JX0</accession>
<protein>
    <recommendedName>
        <fullName evidence="1">3-dehydroquinate dehydratase</fullName>
        <shortName evidence="1">3-dehydroquinase</shortName>
        <ecNumber evidence="1">4.2.1.10</ecNumber>
    </recommendedName>
    <alternativeName>
        <fullName evidence="1">Type I DHQase</fullName>
    </alternativeName>
    <alternativeName>
        <fullName evidence="1">Type I dehydroquinase</fullName>
        <shortName evidence="1">DHQ1</shortName>
    </alternativeName>
</protein>
<feature type="chain" id="PRO_1000043195" description="3-dehydroquinate dehydratase">
    <location>
        <begin position="1"/>
        <end position="225"/>
    </location>
</feature>
<feature type="active site" description="Proton donor/acceptor" evidence="1">
    <location>
        <position position="118"/>
    </location>
</feature>
<feature type="active site" description="Schiff-base intermediate with substrate" evidence="1">
    <location>
        <position position="143"/>
    </location>
</feature>
<feature type="binding site" evidence="1">
    <location>
        <position position="6"/>
    </location>
    <ligand>
        <name>3-dehydroquinate</name>
        <dbReference type="ChEBI" id="CHEBI:32364"/>
    </ligand>
</feature>
<feature type="binding site" evidence="1">
    <location>
        <begin position="30"/>
        <end position="32"/>
    </location>
    <ligand>
        <name>3-dehydroquinate</name>
        <dbReference type="ChEBI" id="CHEBI:32364"/>
    </ligand>
</feature>
<feature type="binding site" evidence="1">
    <location>
        <position position="62"/>
    </location>
    <ligand>
        <name>3-dehydroquinate</name>
        <dbReference type="ChEBI" id="CHEBI:32364"/>
    </ligand>
</feature>
<feature type="binding site" evidence="1">
    <location>
        <position position="186"/>
    </location>
    <ligand>
        <name>3-dehydroquinate</name>
        <dbReference type="ChEBI" id="CHEBI:32364"/>
    </ligand>
</feature>
<feature type="binding site" evidence="1">
    <location>
        <position position="205"/>
    </location>
    <ligand>
        <name>3-dehydroquinate</name>
        <dbReference type="ChEBI" id="CHEBI:32364"/>
    </ligand>
</feature>
<feature type="binding site" evidence="1">
    <location>
        <position position="209"/>
    </location>
    <ligand>
        <name>3-dehydroquinate</name>
        <dbReference type="ChEBI" id="CHEBI:32364"/>
    </ligand>
</feature>
<gene>
    <name evidence="1" type="primary">aroD</name>
    <name type="ordered locus">SPD_1211</name>
</gene>
<organism>
    <name type="scientific">Streptococcus pneumoniae serotype 2 (strain D39 / NCTC 7466)</name>
    <dbReference type="NCBI Taxonomy" id="373153"/>
    <lineage>
        <taxon>Bacteria</taxon>
        <taxon>Bacillati</taxon>
        <taxon>Bacillota</taxon>
        <taxon>Bacilli</taxon>
        <taxon>Lactobacillales</taxon>
        <taxon>Streptococcaceae</taxon>
        <taxon>Streptococcus</taxon>
    </lineage>
</organism>
<proteinExistence type="inferred from homology"/>
<evidence type="ECO:0000255" key="1">
    <source>
        <dbReference type="HAMAP-Rule" id="MF_00214"/>
    </source>
</evidence>
<name>AROD_STRP2</name>
<reference key="1">
    <citation type="journal article" date="2007" name="J. Bacteriol.">
        <title>Genome sequence of Avery's virulent serotype 2 strain D39 of Streptococcus pneumoniae and comparison with that of unencapsulated laboratory strain R6.</title>
        <authorList>
            <person name="Lanie J.A."/>
            <person name="Ng W.-L."/>
            <person name="Kazmierczak K.M."/>
            <person name="Andrzejewski T.M."/>
            <person name="Davidsen T.M."/>
            <person name="Wayne K.J."/>
            <person name="Tettelin H."/>
            <person name="Glass J.I."/>
            <person name="Winkler M.E."/>
        </authorList>
    </citation>
    <scope>NUCLEOTIDE SEQUENCE [LARGE SCALE GENOMIC DNA]</scope>
    <source>
        <strain>D39 / NCTC 7466</strain>
    </source>
</reference>
<dbReference type="EC" id="4.2.1.10" evidence="1"/>
<dbReference type="EMBL" id="CP000410">
    <property type="protein sequence ID" value="ABJ55361.1"/>
    <property type="molecule type" value="Genomic_DNA"/>
</dbReference>
<dbReference type="RefSeq" id="WP_000767762.1">
    <property type="nucleotide sequence ID" value="NZ_JAMLJR010000005.1"/>
</dbReference>
<dbReference type="SMR" id="Q04JX0"/>
<dbReference type="PaxDb" id="373153-SPD_1211"/>
<dbReference type="GeneID" id="45653363"/>
<dbReference type="KEGG" id="spd:SPD_1211"/>
<dbReference type="eggNOG" id="COG0710">
    <property type="taxonomic scope" value="Bacteria"/>
</dbReference>
<dbReference type="HOGENOM" id="CLU_064444_0_0_9"/>
<dbReference type="BioCyc" id="SPNE373153:G1G6V-1309-MONOMER"/>
<dbReference type="UniPathway" id="UPA00053">
    <property type="reaction ID" value="UER00086"/>
</dbReference>
<dbReference type="Proteomes" id="UP000001452">
    <property type="component" value="Chromosome"/>
</dbReference>
<dbReference type="GO" id="GO:0003855">
    <property type="term" value="F:3-dehydroquinate dehydratase activity"/>
    <property type="evidence" value="ECO:0007669"/>
    <property type="project" value="UniProtKB-UniRule"/>
</dbReference>
<dbReference type="GO" id="GO:0046279">
    <property type="term" value="P:3,4-dihydroxybenzoate biosynthetic process"/>
    <property type="evidence" value="ECO:0007669"/>
    <property type="project" value="TreeGrafter"/>
</dbReference>
<dbReference type="GO" id="GO:0008652">
    <property type="term" value="P:amino acid biosynthetic process"/>
    <property type="evidence" value="ECO:0007669"/>
    <property type="project" value="UniProtKB-KW"/>
</dbReference>
<dbReference type="GO" id="GO:0009073">
    <property type="term" value="P:aromatic amino acid family biosynthetic process"/>
    <property type="evidence" value="ECO:0007669"/>
    <property type="project" value="UniProtKB-KW"/>
</dbReference>
<dbReference type="GO" id="GO:0009423">
    <property type="term" value="P:chorismate biosynthetic process"/>
    <property type="evidence" value="ECO:0007669"/>
    <property type="project" value="UniProtKB-UniRule"/>
</dbReference>
<dbReference type="CDD" id="cd00502">
    <property type="entry name" value="DHQase_I"/>
    <property type="match status" value="1"/>
</dbReference>
<dbReference type="FunFam" id="3.20.20.70:FF:000217">
    <property type="entry name" value="3-dehydroquinate dehydratase"/>
    <property type="match status" value="1"/>
</dbReference>
<dbReference type="Gene3D" id="3.20.20.70">
    <property type="entry name" value="Aldolase class I"/>
    <property type="match status" value="1"/>
</dbReference>
<dbReference type="HAMAP" id="MF_00214">
    <property type="entry name" value="AroD"/>
    <property type="match status" value="1"/>
</dbReference>
<dbReference type="InterPro" id="IPR013785">
    <property type="entry name" value="Aldolase_TIM"/>
</dbReference>
<dbReference type="InterPro" id="IPR001381">
    <property type="entry name" value="DHquinase_I"/>
</dbReference>
<dbReference type="InterPro" id="IPR050146">
    <property type="entry name" value="Type-I_3-dehydroquinase"/>
</dbReference>
<dbReference type="NCBIfam" id="TIGR01093">
    <property type="entry name" value="aroD"/>
    <property type="match status" value="1"/>
</dbReference>
<dbReference type="PANTHER" id="PTHR43699">
    <property type="entry name" value="3-DEHYDROQUINATE DEHYDRATASE"/>
    <property type="match status" value="1"/>
</dbReference>
<dbReference type="PANTHER" id="PTHR43699:SF1">
    <property type="entry name" value="3-DEHYDROQUINATE DEHYDRATASE"/>
    <property type="match status" value="1"/>
</dbReference>
<dbReference type="Pfam" id="PF01487">
    <property type="entry name" value="DHquinase_I"/>
    <property type="match status" value="1"/>
</dbReference>
<dbReference type="SUPFAM" id="SSF51569">
    <property type="entry name" value="Aldolase"/>
    <property type="match status" value="1"/>
</dbReference>
<sequence>MKLIVSVMPRSLEEAQALDATRYLDADIIEWRADYLPKEAILQVAPAIFEKFAGRELVFTLRTRSEGGEIDLSPEEYIHLIKEVAQLYQPDYIDFEYYSYKDVFEEMLDFPNLVLSYHNFQETPENMMEILSELTILNPKLVKVAVMAHTEQDVLDLMNYTRGFKTLNPEQEYVTISMGKVGKVSRITADVTGSSWSFASLDEVSAPGQISLASMKKIREILDEA</sequence>